<protein>
    <recommendedName>
        <fullName evidence="1">Ribosomal RNA small subunit methyltransferase G</fullName>
        <ecNumber evidence="1">2.1.1.170</ecNumber>
    </recommendedName>
    <alternativeName>
        <fullName evidence="1">16S rRNA 7-methylguanosine methyltransferase</fullName>
        <shortName evidence="1">16S rRNA m7G methyltransferase</shortName>
    </alternativeName>
</protein>
<accession>B1ZGG1</accession>
<organism>
    <name type="scientific">Methylorubrum populi (strain ATCC BAA-705 / NCIMB 13946 / BJ001)</name>
    <name type="common">Methylobacterium populi</name>
    <dbReference type="NCBI Taxonomy" id="441620"/>
    <lineage>
        <taxon>Bacteria</taxon>
        <taxon>Pseudomonadati</taxon>
        <taxon>Pseudomonadota</taxon>
        <taxon>Alphaproteobacteria</taxon>
        <taxon>Hyphomicrobiales</taxon>
        <taxon>Methylobacteriaceae</taxon>
        <taxon>Methylorubrum</taxon>
    </lineage>
</organism>
<keyword id="KW-0963">Cytoplasm</keyword>
<keyword id="KW-0489">Methyltransferase</keyword>
<keyword id="KW-0698">rRNA processing</keyword>
<keyword id="KW-0949">S-adenosyl-L-methionine</keyword>
<keyword id="KW-0808">Transferase</keyword>
<dbReference type="EC" id="2.1.1.170" evidence="1"/>
<dbReference type="EMBL" id="CP001029">
    <property type="protein sequence ID" value="ACB79819.1"/>
    <property type="molecule type" value="Genomic_DNA"/>
</dbReference>
<dbReference type="RefSeq" id="WP_012453566.1">
    <property type="nucleotide sequence ID" value="NC_010725.1"/>
</dbReference>
<dbReference type="SMR" id="B1ZGG1"/>
<dbReference type="STRING" id="441620.Mpop_1655"/>
<dbReference type="KEGG" id="mpo:Mpop_1655"/>
<dbReference type="eggNOG" id="COG0357">
    <property type="taxonomic scope" value="Bacteria"/>
</dbReference>
<dbReference type="HOGENOM" id="CLU_065341_1_0_5"/>
<dbReference type="OrthoDB" id="9808773at2"/>
<dbReference type="Proteomes" id="UP000007136">
    <property type="component" value="Chromosome"/>
</dbReference>
<dbReference type="GO" id="GO:0005829">
    <property type="term" value="C:cytosol"/>
    <property type="evidence" value="ECO:0007669"/>
    <property type="project" value="TreeGrafter"/>
</dbReference>
<dbReference type="GO" id="GO:0070043">
    <property type="term" value="F:rRNA (guanine-N7-)-methyltransferase activity"/>
    <property type="evidence" value="ECO:0007669"/>
    <property type="project" value="UniProtKB-UniRule"/>
</dbReference>
<dbReference type="Gene3D" id="3.40.50.150">
    <property type="entry name" value="Vaccinia Virus protein VP39"/>
    <property type="match status" value="1"/>
</dbReference>
<dbReference type="HAMAP" id="MF_00074">
    <property type="entry name" value="16SrRNA_methyltr_G"/>
    <property type="match status" value="1"/>
</dbReference>
<dbReference type="InterPro" id="IPR003682">
    <property type="entry name" value="rRNA_ssu_MeTfrase_G"/>
</dbReference>
<dbReference type="InterPro" id="IPR029063">
    <property type="entry name" value="SAM-dependent_MTases_sf"/>
</dbReference>
<dbReference type="NCBIfam" id="TIGR00138">
    <property type="entry name" value="rsmG_gidB"/>
    <property type="match status" value="1"/>
</dbReference>
<dbReference type="PANTHER" id="PTHR31760">
    <property type="entry name" value="S-ADENOSYL-L-METHIONINE-DEPENDENT METHYLTRANSFERASES SUPERFAMILY PROTEIN"/>
    <property type="match status" value="1"/>
</dbReference>
<dbReference type="PANTHER" id="PTHR31760:SF0">
    <property type="entry name" value="S-ADENOSYL-L-METHIONINE-DEPENDENT METHYLTRANSFERASES SUPERFAMILY PROTEIN"/>
    <property type="match status" value="1"/>
</dbReference>
<dbReference type="Pfam" id="PF02527">
    <property type="entry name" value="GidB"/>
    <property type="match status" value="1"/>
</dbReference>
<dbReference type="SUPFAM" id="SSF53335">
    <property type="entry name" value="S-adenosyl-L-methionine-dependent methyltransferases"/>
    <property type="match status" value="1"/>
</dbReference>
<comment type="function">
    <text evidence="1">Specifically methylates the N7 position of guanine in position 527 of 16S rRNA.</text>
</comment>
<comment type="catalytic activity">
    <reaction evidence="1">
        <text>guanosine(527) in 16S rRNA + S-adenosyl-L-methionine = N(7)-methylguanosine(527) in 16S rRNA + S-adenosyl-L-homocysteine</text>
        <dbReference type="Rhea" id="RHEA:42732"/>
        <dbReference type="Rhea" id="RHEA-COMP:10209"/>
        <dbReference type="Rhea" id="RHEA-COMP:10210"/>
        <dbReference type="ChEBI" id="CHEBI:57856"/>
        <dbReference type="ChEBI" id="CHEBI:59789"/>
        <dbReference type="ChEBI" id="CHEBI:74269"/>
        <dbReference type="ChEBI" id="CHEBI:74480"/>
        <dbReference type="EC" id="2.1.1.170"/>
    </reaction>
</comment>
<comment type="subcellular location">
    <subcellularLocation>
        <location evidence="1">Cytoplasm</location>
    </subcellularLocation>
</comment>
<comment type="similarity">
    <text evidence="1">Belongs to the methyltransferase superfamily. RNA methyltransferase RsmG family.</text>
</comment>
<feature type="chain" id="PRO_1000092638" description="Ribosomal RNA small subunit methyltransferase G">
    <location>
        <begin position="1"/>
        <end position="211"/>
    </location>
</feature>
<feature type="binding site" evidence="1">
    <location>
        <position position="73"/>
    </location>
    <ligand>
        <name>S-adenosyl-L-methionine</name>
        <dbReference type="ChEBI" id="CHEBI:59789"/>
    </ligand>
</feature>
<feature type="binding site" evidence="1">
    <location>
        <begin position="126"/>
        <end position="127"/>
    </location>
    <ligand>
        <name>S-adenosyl-L-methionine</name>
        <dbReference type="ChEBI" id="CHEBI:59789"/>
    </ligand>
</feature>
<feature type="binding site" evidence="1">
    <location>
        <position position="142"/>
    </location>
    <ligand>
        <name>S-adenosyl-L-methionine</name>
        <dbReference type="ChEBI" id="CHEBI:59789"/>
    </ligand>
</feature>
<gene>
    <name evidence="1" type="primary">rsmG</name>
    <name type="ordered locus">Mpop_1655</name>
</gene>
<sequence length="211" mass="22876">MSTDLRSRVLTEHNVSRETAQALDLYVAQLTRWQTVKNLVGPATLSEVWQRHVADALQLLTIAPEARRWLDLGSGAGIPGLILAIAGRGRSGFHVELVESNARKCAFLSETARLTGAPVTVHNARIEAVIGHRSGIDIVCARALAPLTQLLAWSEPLLTSGTVGLFPKGRDAAAELTEAEDAWTFTRDLIPSRTDSQARIVRVTSLSRVDP</sequence>
<proteinExistence type="inferred from homology"/>
<evidence type="ECO:0000255" key="1">
    <source>
        <dbReference type="HAMAP-Rule" id="MF_00074"/>
    </source>
</evidence>
<reference key="1">
    <citation type="submission" date="2008-04" db="EMBL/GenBank/DDBJ databases">
        <title>Complete sequence of chromosome of Methylobacterium populi BJ001.</title>
        <authorList>
            <consortium name="US DOE Joint Genome Institute"/>
            <person name="Copeland A."/>
            <person name="Lucas S."/>
            <person name="Lapidus A."/>
            <person name="Glavina del Rio T."/>
            <person name="Dalin E."/>
            <person name="Tice H."/>
            <person name="Bruce D."/>
            <person name="Goodwin L."/>
            <person name="Pitluck S."/>
            <person name="Chertkov O."/>
            <person name="Brettin T."/>
            <person name="Detter J.C."/>
            <person name="Han C."/>
            <person name="Kuske C.R."/>
            <person name="Schmutz J."/>
            <person name="Larimer F."/>
            <person name="Land M."/>
            <person name="Hauser L."/>
            <person name="Kyrpides N."/>
            <person name="Mikhailova N."/>
            <person name="Marx C."/>
            <person name="Richardson P."/>
        </authorList>
    </citation>
    <scope>NUCLEOTIDE SEQUENCE [LARGE SCALE GENOMIC DNA]</scope>
    <source>
        <strain>ATCC BAA-705 / NCIMB 13946 / BJ001</strain>
    </source>
</reference>
<name>RSMG_METPB</name>